<keyword id="KW-0025">Alternative splicing</keyword>
<keyword id="KW-1003">Cell membrane</keyword>
<keyword id="KW-0297">G-protein coupled receptor</keyword>
<keyword id="KW-0325">Glycoprotein</keyword>
<keyword id="KW-0449">Lipoprotein</keyword>
<keyword id="KW-0472">Membrane</keyword>
<keyword id="KW-0564">Palmitate</keyword>
<keyword id="KW-0675">Receptor</keyword>
<keyword id="KW-1185">Reference proteome</keyword>
<keyword id="KW-0807">Transducer</keyword>
<keyword id="KW-0812">Transmembrane</keyword>
<keyword id="KW-1133">Transmembrane helix</keyword>
<comment type="function">
    <text evidence="1 5">Receptor for prostaglandin E2 (PGE2) (PubMed:8396726). The various isoforms have identical ligand binding properties but interact with different second messenger systems: isoform EP3A couples to G(i)/G(o) proteins; isoform EP3B and isoform EP3C couple to G(s), and isoform EP3D couples to G(i), G(s) and G(p) (PubMed:8396726). Required for normal development of fever in response to pyrinogens, including IL1B, prostaglandin E2 and bacterial lipopolysaccharide (LPS). Required for normal potentiation of platelet aggregation by prostaglandin E2, and thus plays a role in the regulation of blood coagulation. Required for increased HCO3(-) secretion in the duodenum in response to mucosal acidification, and thereby contributes to the protection of the mucosa against acid-induced ulceration. Not required for normal kidney function, normal urine volume and osmolality (By similarity).</text>
</comment>
<comment type="subunit">
    <text evidence="2">Interacts (via C-terminus) with MKLN1.</text>
</comment>
<comment type="subcellular location">
    <subcellularLocation>
        <location evidence="5">Cell membrane</location>
        <topology evidence="7">Multi-pass membrane protein</topology>
    </subcellularLocation>
</comment>
<comment type="alternative products">
    <event type="alternative splicing"/>
    <isoform>
        <id>P34979-1</id>
        <name>EP3A</name>
        <sequence type="displayed"/>
    </isoform>
    <isoform>
        <id>P34979-2</id>
        <name>EP3B</name>
        <sequence type="described" ref="VSP_001929 VSP_001930"/>
    </isoform>
    <isoform>
        <id>P34979-3</id>
        <name>EP3C</name>
        <sequence type="described" ref="VSP_001931 VSP_001932"/>
    </isoform>
    <isoform>
        <id>P34979-4</id>
        <name>EP3D</name>
        <sequence type="described" ref="VSP_001933 VSP_001934"/>
    </isoform>
    <text>Additional isoforms seem to exist.</text>
</comment>
<comment type="similarity">
    <text evidence="4">Belongs to the G-protein coupled receptor 1 family.</text>
</comment>
<reference key="1">
    <citation type="journal article" date="1993" name="Nature">
        <title>Alternative splicing of C-terminal tail of prostaglandin E receptor subtype EP3 determines G-protein specificity.</title>
        <authorList>
            <person name="Namba T."/>
            <person name="Sugimoto Y."/>
            <person name="Negish M."/>
            <person name="Irie A."/>
            <person name="Ushikubi F."/>
            <person name="Kakizuka A."/>
            <person name="Ito S."/>
            <person name="Ichikawa A."/>
            <person name="Narumiya S.S."/>
        </authorList>
    </citation>
    <scope>NUCLEOTIDE SEQUENCE [MRNA] (ISOFORMS EP3A; EP3B; EP3C AND EP3D)</scope>
    <scope>FUNCTION</scope>
    <scope>SUBCELLULAR LOCATION</scope>
    <source>
        <tissue>Adrenal medulla</tissue>
    </source>
</reference>
<organism>
    <name type="scientific">Bos taurus</name>
    <name type="common">Bovine</name>
    <dbReference type="NCBI Taxonomy" id="9913"/>
    <lineage>
        <taxon>Eukaryota</taxon>
        <taxon>Metazoa</taxon>
        <taxon>Chordata</taxon>
        <taxon>Craniata</taxon>
        <taxon>Vertebrata</taxon>
        <taxon>Euteleostomi</taxon>
        <taxon>Mammalia</taxon>
        <taxon>Eutheria</taxon>
        <taxon>Laurasiatheria</taxon>
        <taxon>Artiodactyla</taxon>
        <taxon>Ruminantia</taxon>
        <taxon>Pecora</taxon>
        <taxon>Bovidae</taxon>
        <taxon>Bovinae</taxon>
        <taxon>Bos</taxon>
    </lineage>
</organism>
<feature type="chain" id="PRO_0000070057" description="Prostaglandin E2 receptor EP3 subtype">
    <location>
        <begin position="1"/>
        <end position="417"/>
    </location>
</feature>
<feature type="topological domain" description="Extracellular" evidence="3">
    <location>
        <begin position="1"/>
        <end position="52"/>
    </location>
</feature>
<feature type="transmembrane region" description="Helical; Name=1" evidence="3">
    <location>
        <begin position="53"/>
        <end position="77"/>
    </location>
</feature>
<feature type="topological domain" description="Cytoplasmic" evidence="3">
    <location>
        <begin position="78"/>
        <end position="90"/>
    </location>
</feature>
<feature type="transmembrane region" description="Helical; Name=2" evidence="3">
    <location>
        <begin position="91"/>
        <end position="111"/>
    </location>
</feature>
<feature type="topological domain" description="Extracellular" evidence="3">
    <location>
        <begin position="112"/>
        <end position="130"/>
    </location>
</feature>
<feature type="transmembrane region" description="Helical; Name=3" evidence="3">
    <location>
        <begin position="131"/>
        <end position="152"/>
    </location>
</feature>
<feature type="topological domain" description="Cytoplasmic" evidence="3">
    <location>
        <begin position="153"/>
        <end position="174"/>
    </location>
</feature>
<feature type="transmembrane region" description="Helical; Name=4" evidence="3">
    <location>
        <begin position="175"/>
        <end position="196"/>
    </location>
</feature>
<feature type="topological domain" description="Extracellular" evidence="3">
    <location>
        <begin position="197"/>
        <end position="226"/>
    </location>
</feature>
<feature type="transmembrane region" description="Helical; Name=5" evidence="3">
    <location>
        <begin position="227"/>
        <end position="252"/>
    </location>
</feature>
<feature type="topological domain" description="Cytoplasmic" evidence="3">
    <location>
        <begin position="253"/>
        <end position="282"/>
    </location>
</feature>
<feature type="transmembrane region" description="Helical; Name=6" evidence="3">
    <location>
        <begin position="283"/>
        <end position="306"/>
    </location>
</feature>
<feature type="topological domain" description="Extracellular" evidence="3">
    <location>
        <begin position="307"/>
        <end position="326"/>
    </location>
</feature>
<feature type="transmembrane region" description="Helical; Name=7" evidence="3">
    <location>
        <begin position="327"/>
        <end position="348"/>
    </location>
</feature>
<feature type="topological domain" description="Cytoplasmic" evidence="3">
    <location>
        <begin position="349"/>
        <end position="417"/>
    </location>
</feature>
<feature type="glycosylation site" description="N-linked (GlcNAc...) asparagine" evidence="3">
    <location>
        <position position="17"/>
    </location>
</feature>
<feature type="glycosylation site" description="N-linked (GlcNAc...) asparagine" evidence="3">
    <location>
        <position position="35"/>
    </location>
</feature>
<feature type="glycosylation site" description="N-linked (GlcNAc...) asparagine" evidence="3">
    <location>
        <position position="216"/>
    </location>
</feature>
<feature type="glycosylation site" description="N-linked (GlcNAc...) asparagine" evidence="3">
    <location>
        <position position="307"/>
    </location>
</feature>
<feature type="splice variant" id="VSP_001929" description="In isoform EP3B." evidence="6">
    <original>LLKGHSYGLDTEGGTENKDKEMKENLYIS</original>
    <variation>VANAVSSYFNDGPKVPTISLSNEITQTGA</variation>
    <location>
        <begin position="359"/>
        <end position="387"/>
    </location>
</feature>
<feature type="splice variant" id="VSP_001933" description="In isoform EP3D." evidence="6">
    <original>LLKGHSYGLDTEGGTENKDKEMKENLY</original>
    <variation>ASPRSMWDPSSPTRDRTRVPCIGSTES</variation>
    <location>
        <begin position="359"/>
        <end position="385"/>
    </location>
</feature>
<feature type="splice variant" id="VSP_001931" description="In isoform EP3C." evidence="6">
    <original>LLKG</original>
    <variation>HVGS</variation>
    <location>
        <begin position="359"/>
        <end position="362"/>
    </location>
</feature>
<feature type="splice variant" id="VSP_001932" description="In isoform EP3C." evidence="6">
    <location>
        <begin position="363"/>
        <end position="417"/>
    </location>
</feature>
<feature type="splice variant" id="VSP_001934" description="In isoform EP3D." evidence="6">
    <location>
        <begin position="386"/>
        <end position="417"/>
    </location>
</feature>
<feature type="splice variant" id="VSP_001930" description="In isoform EP3B." evidence="6">
    <location>
        <begin position="388"/>
        <end position="417"/>
    </location>
</feature>
<name>PE2R3_BOVIN</name>
<gene>
    <name type="primary">PTGER3</name>
</gene>
<accession>P34979</accession>
<proteinExistence type="evidence at transcript level"/>
<evidence type="ECO:0000250" key="1">
    <source>
        <dbReference type="UniProtKB" id="P30557"/>
    </source>
</evidence>
<evidence type="ECO:0000250" key="2">
    <source>
        <dbReference type="UniProtKB" id="P34980"/>
    </source>
</evidence>
<evidence type="ECO:0000255" key="3"/>
<evidence type="ECO:0000255" key="4">
    <source>
        <dbReference type="PROSITE-ProRule" id="PRU00521"/>
    </source>
</evidence>
<evidence type="ECO:0000269" key="5">
    <source>
    </source>
</evidence>
<evidence type="ECO:0000303" key="6">
    <source>
    </source>
</evidence>
<evidence type="ECO:0000305" key="7"/>
<protein>
    <recommendedName>
        <fullName>Prostaglandin E2 receptor EP3 subtype</fullName>
        <shortName>PGE receptor EP3 subtype</shortName>
        <shortName>PGE2 receptor EP3 subtype</shortName>
    </recommendedName>
    <alternativeName>
        <fullName>Prostanoid EP3 receptor</fullName>
    </alternativeName>
</protein>
<sequence length="417" mass="46362">MKATRDHASAPFCTRFNHSDPGIWAAERAVEAPNNLTLPPEPSEDCGSVSVAFSMTMMITGFVGNALAITLVSKSYRRREGKRKKSFLLCIGWLALTDMVGQLLTSPVVIVLYLSHQRWEQLDPSGRLCTFFGLTMTVFGLSSLFIASAMAVERALATRAPHWYSSHMKTSVTRAVLLGVWLAVLAFALLPVLGVGQYTIQWPGTWCFISTGPGGNGTNSRQNWGNVFFASAFAILGLSALVVTFACNLATIKALVSRCRAKATASQSSAQWGRITTETAIQLMGIMCVLSVCWSPLLIMMLKMIFNHTSVEHCKTYTENQDECNFFLIAVRLASLNQILDPWVYLLLRKILLQKFCQLLKGHSYGLDTEGGTENKDKEMKENLYISNLSRFFILLGHFTEARRGRGHIYLHTLEHQ</sequence>
<dbReference type="EMBL" id="D21345">
    <property type="protein sequence ID" value="BAA04811.1"/>
    <property type="molecule type" value="mRNA"/>
</dbReference>
<dbReference type="EMBL" id="D21346">
    <property type="protein sequence ID" value="BAA04812.1"/>
    <property type="molecule type" value="mRNA"/>
</dbReference>
<dbReference type="EMBL" id="D21347">
    <property type="protein sequence ID" value="BAA04813.1"/>
    <property type="molecule type" value="mRNA"/>
</dbReference>
<dbReference type="EMBL" id="D21348">
    <property type="protein sequence ID" value="BAA04814.1"/>
    <property type="molecule type" value="mRNA"/>
</dbReference>
<dbReference type="PIR" id="S36764">
    <property type="entry name" value="S36764"/>
</dbReference>
<dbReference type="PIR" id="S36765">
    <property type="entry name" value="S36765"/>
</dbReference>
<dbReference type="PIR" id="S36766">
    <property type="entry name" value="S36766"/>
</dbReference>
<dbReference type="PIR" id="S36767">
    <property type="entry name" value="S36767"/>
</dbReference>
<dbReference type="RefSeq" id="NP_851375.1">
    <molecule id="P34979-1"/>
    <property type="nucleotide sequence ID" value="NM_181032.1"/>
</dbReference>
<dbReference type="RefSeq" id="XP_005204501.1">
    <molecule id="P34979-3"/>
    <property type="nucleotide sequence ID" value="XM_005204444.5"/>
</dbReference>
<dbReference type="RefSeq" id="XP_010801729.1">
    <property type="nucleotide sequence ID" value="XM_010803427.2"/>
</dbReference>
<dbReference type="RefSeq" id="XP_024840613.1">
    <molecule id="P34979-4"/>
    <property type="nucleotide sequence ID" value="XM_024984845.2"/>
</dbReference>
<dbReference type="SMR" id="P34979"/>
<dbReference type="FunCoup" id="P34979">
    <property type="interactions" value="337"/>
</dbReference>
<dbReference type="STRING" id="9913.ENSBTAP00000059944"/>
<dbReference type="BindingDB" id="P34979"/>
<dbReference type="GlyCosmos" id="P34979">
    <property type="glycosylation" value="4 sites, No reported glycans"/>
</dbReference>
<dbReference type="GlyGen" id="P34979">
    <property type="glycosylation" value="4 sites"/>
</dbReference>
<dbReference type="PaxDb" id="9913-ENSBTAP00000025607"/>
<dbReference type="Ensembl" id="ENSBTAT00000064398.3">
    <molecule id="P34979-1"/>
    <property type="protein sequence ID" value="ENSBTAP00000054348.3"/>
    <property type="gene ID" value="ENSBTAG00000019230.5"/>
</dbReference>
<dbReference type="GeneID" id="282330"/>
<dbReference type="KEGG" id="bta:282330"/>
<dbReference type="CTD" id="5733"/>
<dbReference type="VEuPathDB" id="HostDB:ENSBTAG00000019230"/>
<dbReference type="eggNOG" id="KOG3656">
    <property type="taxonomic scope" value="Eukaryota"/>
</dbReference>
<dbReference type="GeneTree" id="ENSGT01030000234559"/>
<dbReference type="HOGENOM" id="CLU_045991_3_0_1"/>
<dbReference type="InParanoid" id="P34979"/>
<dbReference type="OrthoDB" id="5959154at2759"/>
<dbReference type="TreeFam" id="TF324982"/>
<dbReference type="Reactome" id="R-BTA-391908">
    <property type="pathway name" value="Prostanoid ligand receptors"/>
</dbReference>
<dbReference type="Reactome" id="R-BTA-418594">
    <property type="pathway name" value="G alpha (i) signalling events"/>
</dbReference>
<dbReference type="Proteomes" id="UP000009136">
    <property type="component" value="Chromosome 3"/>
</dbReference>
<dbReference type="Bgee" id="ENSBTAG00000019230">
    <property type="expression patterns" value="Expressed in cardiac ventricle and 86 other cell types or tissues"/>
</dbReference>
<dbReference type="GO" id="GO:0005886">
    <property type="term" value="C:plasma membrane"/>
    <property type="evidence" value="ECO:0000250"/>
    <property type="project" value="UniProtKB"/>
</dbReference>
<dbReference type="GO" id="GO:0004957">
    <property type="term" value="F:prostaglandin E receptor activity"/>
    <property type="evidence" value="ECO:0000318"/>
    <property type="project" value="GO_Central"/>
</dbReference>
<dbReference type="GO" id="GO:0007189">
    <property type="term" value="P:adenylate cyclase-activating G protein-coupled receptor signaling pathway"/>
    <property type="evidence" value="ECO:0000318"/>
    <property type="project" value="GO_Central"/>
</dbReference>
<dbReference type="GO" id="GO:0006954">
    <property type="term" value="P:inflammatory response"/>
    <property type="evidence" value="ECO:0000318"/>
    <property type="project" value="GO_Central"/>
</dbReference>
<dbReference type="GO" id="GO:0014827">
    <property type="term" value="P:intestine smooth muscle contraction"/>
    <property type="evidence" value="ECO:0000318"/>
    <property type="project" value="GO_Central"/>
</dbReference>
<dbReference type="GO" id="GO:0060455">
    <property type="term" value="P:negative regulation of gastric acid secretion"/>
    <property type="evidence" value="ECO:0000318"/>
    <property type="project" value="GO_Central"/>
</dbReference>
<dbReference type="GO" id="GO:0007200">
    <property type="term" value="P:phospholipase C-activating G protein-coupled receptor signaling pathway"/>
    <property type="evidence" value="ECO:0000318"/>
    <property type="project" value="GO_Central"/>
</dbReference>
<dbReference type="GO" id="GO:0007204">
    <property type="term" value="P:positive regulation of cytosolic calcium ion concentration"/>
    <property type="evidence" value="ECO:0000318"/>
    <property type="project" value="GO_Central"/>
</dbReference>
<dbReference type="CDD" id="cd15146">
    <property type="entry name" value="7tmA_PGE2_EP3"/>
    <property type="match status" value="1"/>
</dbReference>
<dbReference type="FunFam" id="1.20.1070.10:FF:000087">
    <property type="entry name" value="prostaglandin E2 receptor EP3 subtype"/>
    <property type="match status" value="1"/>
</dbReference>
<dbReference type="Gene3D" id="1.20.1070.10">
    <property type="entry name" value="Rhodopsin 7-helix transmembrane proteins"/>
    <property type="match status" value="1"/>
</dbReference>
<dbReference type="InterPro" id="IPR003304">
    <property type="entry name" value="EP3_rcpt_1"/>
</dbReference>
<dbReference type="InterPro" id="IPR000276">
    <property type="entry name" value="GPCR_Rhodpsn"/>
</dbReference>
<dbReference type="InterPro" id="IPR017452">
    <property type="entry name" value="GPCR_Rhodpsn_7TM"/>
</dbReference>
<dbReference type="InterPro" id="IPR008365">
    <property type="entry name" value="Prostanoid_rcpt"/>
</dbReference>
<dbReference type="InterPro" id="IPR001244">
    <property type="entry name" value="Prostglndn_DP_rcpt"/>
</dbReference>
<dbReference type="InterPro" id="IPR000265">
    <property type="entry name" value="Prostglndn_EP3_rcpt"/>
</dbReference>
<dbReference type="PANTHER" id="PTHR11866">
    <property type="entry name" value="G-PROTEIN COUPLED RECEPTOR FAMILY 1 MEMBER"/>
    <property type="match status" value="1"/>
</dbReference>
<dbReference type="PANTHER" id="PTHR11866:SF10">
    <property type="entry name" value="PROSTAGLANDIN E2 RECEPTOR EP3 SUBTYPE"/>
    <property type="match status" value="1"/>
</dbReference>
<dbReference type="Pfam" id="PF00001">
    <property type="entry name" value="7tm_1"/>
    <property type="match status" value="1"/>
</dbReference>
<dbReference type="PRINTS" id="PR00237">
    <property type="entry name" value="GPCRRHODOPSN"/>
</dbReference>
<dbReference type="PRINTS" id="PR00428">
    <property type="entry name" value="PROSTAGLNDNR"/>
</dbReference>
<dbReference type="PRINTS" id="PR01788">
    <property type="entry name" value="PROSTANOIDR"/>
</dbReference>
<dbReference type="PRINTS" id="PR00583">
    <property type="entry name" value="PRSTNOIDE31R"/>
</dbReference>
<dbReference type="PRINTS" id="PR00582">
    <property type="entry name" value="PRSTNOIDEP3R"/>
</dbReference>
<dbReference type="SUPFAM" id="SSF81321">
    <property type="entry name" value="Family A G protein-coupled receptor-like"/>
    <property type="match status" value="1"/>
</dbReference>
<dbReference type="PROSITE" id="PS50262">
    <property type="entry name" value="G_PROTEIN_RECEP_F1_2"/>
    <property type="match status" value="1"/>
</dbReference>